<proteinExistence type="inferred from homology"/>
<organism>
    <name type="scientific">Glaesserella parasuis serovar 5 (strain SH0165)</name>
    <name type="common">Haemophilus parasuis</name>
    <dbReference type="NCBI Taxonomy" id="557723"/>
    <lineage>
        <taxon>Bacteria</taxon>
        <taxon>Pseudomonadati</taxon>
        <taxon>Pseudomonadota</taxon>
        <taxon>Gammaproteobacteria</taxon>
        <taxon>Pasteurellales</taxon>
        <taxon>Pasteurellaceae</taxon>
        <taxon>Glaesserella</taxon>
    </lineage>
</organism>
<evidence type="ECO:0000255" key="1">
    <source>
        <dbReference type="HAMAP-Rule" id="MF_00003"/>
    </source>
</evidence>
<keyword id="KW-0963">Cytoplasm</keyword>
<keyword id="KW-1185">Reference proteome</keyword>
<keyword id="KW-0690">Ribosome biogenesis</keyword>
<protein>
    <recommendedName>
        <fullName evidence="1">Ribosome-binding factor A</fullName>
    </recommendedName>
</protein>
<sequence>MAREFSRADRVAQELQKEIAIILQREVKDPRIGMVTVSDVEISRDLAYAKVFVTFLFDSDESAVERGLEGLNKASGYIRTLVGKAMRLRIVPELRFVYDQSLVEGMRMSNLVTNVIRKDQERYVEEE</sequence>
<feature type="chain" id="PRO_1000193262" description="Ribosome-binding factor A">
    <location>
        <begin position="1"/>
        <end position="127"/>
    </location>
</feature>
<comment type="function">
    <text evidence="1">One of several proteins that assist in the late maturation steps of the functional core of the 30S ribosomal subunit. Associates with free 30S ribosomal subunits (but not with 30S subunits that are part of 70S ribosomes or polysomes). Required for efficient processing of 16S rRNA. May interact with the 5'-terminal helix region of 16S rRNA.</text>
</comment>
<comment type="subunit">
    <text evidence="1">Monomer. Binds 30S ribosomal subunits, but not 50S ribosomal subunits or 70S ribosomes.</text>
</comment>
<comment type="subcellular location">
    <subcellularLocation>
        <location evidence="1">Cytoplasm</location>
    </subcellularLocation>
</comment>
<comment type="similarity">
    <text evidence="1">Belongs to the RbfA family.</text>
</comment>
<gene>
    <name evidence="1" type="primary">rbfA</name>
    <name type="ordered locus">HAPS_0646</name>
</gene>
<accession>B8F4P3</accession>
<dbReference type="EMBL" id="CP001321">
    <property type="protein sequence ID" value="ACL32295.1"/>
    <property type="molecule type" value="Genomic_DNA"/>
</dbReference>
<dbReference type="RefSeq" id="WP_012621846.1">
    <property type="nucleotide sequence ID" value="NC_011852.1"/>
</dbReference>
<dbReference type="SMR" id="B8F4P3"/>
<dbReference type="STRING" id="557723.HAPS_0646"/>
<dbReference type="GeneID" id="66619015"/>
<dbReference type="KEGG" id="hap:HAPS_0646"/>
<dbReference type="HOGENOM" id="CLU_089475_5_0_6"/>
<dbReference type="Proteomes" id="UP000006743">
    <property type="component" value="Chromosome"/>
</dbReference>
<dbReference type="GO" id="GO:0005829">
    <property type="term" value="C:cytosol"/>
    <property type="evidence" value="ECO:0007669"/>
    <property type="project" value="TreeGrafter"/>
</dbReference>
<dbReference type="GO" id="GO:0043024">
    <property type="term" value="F:ribosomal small subunit binding"/>
    <property type="evidence" value="ECO:0007669"/>
    <property type="project" value="TreeGrafter"/>
</dbReference>
<dbReference type="GO" id="GO:0030490">
    <property type="term" value="P:maturation of SSU-rRNA"/>
    <property type="evidence" value="ECO:0007669"/>
    <property type="project" value="UniProtKB-UniRule"/>
</dbReference>
<dbReference type="FunFam" id="3.30.300.20:FF:000007">
    <property type="entry name" value="Ribosome-binding factor A"/>
    <property type="match status" value="1"/>
</dbReference>
<dbReference type="Gene3D" id="3.30.300.20">
    <property type="match status" value="1"/>
</dbReference>
<dbReference type="HAMAP" id="MF_00003">
    <property type="entry name" value="RbfA"/>
    <property type="match status" value="1"/>
</dbReference>
<dbReference type="InterPro" id="IPR015946">
    <property type="entry name" value="KH_dom-like_a/b"/>
</dbReference>
<dbReference type="InterPro" id="IPR000238">
    <property type="entry name" value="RbfA"/>
</dbReference>
<dbReference type="InterPro" id="IPR023799">
    <property type="entry name" value="RbfA_dom_sf"/>
</dbReference>
<dbReference type="InterPro" id="IPR020053">
    <property type="entry name" value="Ribosome-bd_factorA_CS"/>
</dbReference>
<dbReference type="NCBIfam" id="TIGR00082">
    <property type="entry name" value="rbfA"/>
    <property type="match status" value="1"/>
</dbReference>
<dbReference type="PANTHER" id="PTHR33515">
    <property type="entry name" value="RIBOSOME-BINDING FACTOR A, CHLOROPLASTIC-RELATED"/>
    <property type="match status" value="1"/>
</dbReference>
<dbReference type="PANTHER" id="PTHR33515:SF1">
    <property type="entry name" value="RIBOSOME-BINDING FACTOR A, CHLOROPLASTIC-RELATED"/>
    <property type="match status" value="1"/>
</dbReference>
<dbReference type="Pfam" id="PF02033">
    <property type="entry name" value="RBFA"/>
    <property type="match status" value="1"/>
</dbReference>
<dbReference type="SUPFAM" id="SSF89919">
    <property type="entry name" value="Ribosome-binding factor A, RbfA"/>
    <property type="match status" value="1"/>
</dbReference>
<dbReference type="PROSITE" id="PS01319">
    <property type="entry name" value="RBFA"/>
    <property type="match status" value="1"/>
</dbReference>
<name>RBFA_GLAP5</name>
<reference key="1">
    <citation type="journal article" date="2009" name="J. Bacteriol.">
        <title>Complete genome sequence of Haemophilus parasuis SH0165.</title>
        <authorList>
            <person name="Yue M."/>
            <person name="Yang F."/>
            <person name="Yang J."/>
            <person name="Bei W."/>
            <person name="Cai X."/>
            <person name="Chen L."/>
            <person name="Dong J."/>
            <person name="Zhou R."/>
            <person name="Jin M."/>
            <person name="Jin Q."/>
            <person name="Chen H."/>
        </authorList>
    </citation>
    <scope>NUCLEOTIDE SEQUENCE [LARGE SCALE GENOMIC DNA]</scope>
    <source>
        <strain>SH0165</strain>
    </source>
</reference>